<sequence length="227" mass="24855">MKNILKVFNTTILALIIIIATFSNSANAADSGTLNYEVYKYNTNDTSIANDYFNKPAKYIKKNGKLYVQITVNHSHWITGMSIEGHKENIISKNTAKDERTSEFEVSKLNGKIDGKIDVYIDEKVNGKPFKYDHHYNITYKFNGPTDVAGANAPGKDDKNSASGSDKGSDGTTTGQSESNSSNKDKVENPQTNAGTPAYIYAIPVASLALLIAITLFVRKKSKGNVE</sequence>
<reference key="1">
    <citation type="journal article" date="2002" name="Lancet">
        <title>Genome and virulence determinants of high virulence community-acquired MRSA.</title>
        <authorList>
            <person name="Baba T."/>
            <person name="Takeuchi F."/>
            <person name="Kuroda M."/>
            <person name="Yuzawa H."/>
            <person name="Aoki K."/>
            <person name="Oguchi A."/>
            <person name="Nagai Y."/>
            <person name="Iwama N."/>
            <person name="Asano K."/>
            <person name="Naimi T."/>
            <person name="Kuroda H."/>
            <person name="Cui L."/>
            <person name="Yamamoto K."/>
            <person name="Hiramatsu K."/>
        </authorList>
    </citation>
    <scope>NUCLEOTIDE SEQUENCE [LARGE SCALE GENOMIC DNA]</scope>
    <source>
        <strain>MW2</strain>
    </source>
</reference>
<reference key="2">
    <citation type="journal article" date="2008" name="J. Biol. Chem.">
        <title>Direct hemin transfer from IsdA to IsdC in the iron-regulated surface determinant (Isd) heme acquisition system of Staphylococcus aureus.</title>
        <authorList>
            <person name="Liu M."/>
            <person name="Tanaka W.N."/>
            <person name="Zhu H."/>
            <person name="Xie G."/>
            <person name="Dooley D.M."/>
            <person name="Lei B."/>
        </authorList>
    </citation>
    <scope>FUNCTION IN ACQUIRING HEMIN FROM ISDA</scope>
    <scope>INTERACTION WITH ISDA</scope>
</reference>
<reference key="3">
    <citation type="journal article" date="2008" name="J. Immunol.">
        <title>Neutrophil microbicides induce a pathogen survival response in community-associated methicillin-resistant Staphylococcus aureus.</title>
        <authorList>
            <person name="Palazzolo-Ballance A.M."/>
            <person name="Reniere M.L."/>
            <person name="Braughton K.R."/>
            <person name="Sturdevant D.E."/>
            <person name="Otto M."/>
            <person name="Kreiswirth B.N."/>
            <person name="Skaar E.P."/>
            <person name="DeLeo F.R."/>
        </authorList>
    </citation>
    <scope>INDUCTION</scope>
</reference>
<gene>
    <name type="primary">isdC</name>
    <name type="synonym">sirD</name>
    <name type="ordered locus">MW1013</name>
</gene>
<keyword id="KW-0002">3D-structure</keyword>
<keyword id="KW-0134">Cell wall</keyword>
<keyword id="KW-0349">Heme</keyword>
<keyword id="KW-0408">Iron</keyword>
<keyword id="KW-0479">Metal-binding</keyword>
<keyword id="KW-0572">Peptidoglycan-anchor</keyword>
<keyword id="KW-0964">Secreted</keyword>
<keyword id="KW-0732">Signal</keyword>
<comment type="function">
    <text evidence="1 7">Involved in heme (porphyrin) scavenging. Binds hemoglobin and almost exclusively free-base protoporphyrin IX. Probably has a role as the central conduit of the isd heme uptake system, i.e. mediates the transfer of the iron-containing nutrient from IsdABH to the membrane translocation system IsdDEF (By similarity). Hemin-free IsdC (apo-IsdC) acquires hemin from hemin-containing IsdA (holo-IsdA) probably through the activated holo-IsdA-apo-IsdC complex and due to the higher affinity of apo-IsdC for the cofactor. The reaction is reversible.</text>
</comment>
<comment type="subunit">
    <text evidence="1 7">Monomer (By similarity). Interacts with IsdA.</text>
</comment>
<comment type="subcellular location">
    <subcellularLocation>
        <location evidence="1">Secreted</location>
        <location evidence="1">Cell wall</location>
        <topology evidence="1">Peptidoglycan-anchor</topology>
    </subcellularLocation>
    <text evidence="2">Anchored to the cell wall by sortase B (By similarity).</text>
</comment>
<comment type="induction">
    <text evidence="1 6">Repressed by fur in the presence of iron (By similarity). Transcriptionally up-regulated by hydrogen peroxide and to a lesser extent by hypochlorous acid. Slightly down-regulated by human neutrophil azurophilic granule proteins.</text>
</comment>
<comment type="domain">
    <text evidence="1">The NEAT domain binds Fe(3+) heme iron. Reduction of the high-spin Fe(3+) heme iron to high-spin Fe(2+) results in loss of the heme from the binding site of the protein due to the absence of a proximal histidine (By similarity).</text>
</comment>
<comment type="similarity">
    <text evidence="8">Belongs to the IsdC family.</text>
</comment>
<evidence type="ECO:0000250" key="1"/>
<evidence type="ECO:0000250" key="2">
    <source>
        <dbReference type="UniProtKB" id="Q8KQR1"/>
    </source>
</evidence>
<evidence type="ECO:0000255" key="3"/>
<evidence type="ECO:0000255" key="4">
    <source>
        <dbReference type="PROSITE-ProRule" id="PRU00337"/>
    </source>
</evidence>
<evidence type="ECO:0000256" key="5">
    <source>
        <dbReference type="SAM" id="MobiDB-lite"/>
    </source>
</evidence>
<evidence type="ECO:0000269" key="6">
    <source>
    </source>
</evidence>
<evidence type="ECO:0000269" key="7">
    <source>
    </source>
</evidence>
<evidence type="ECO:0000305" key="8"/>
<evidence type="ECO:0007829" key="9">
    <source>
        <dbReference type="PDB" id="2K78"/>
    </source>
</evidence>
<organism>
    <name type="scientific">Staphylococcus aureus (strain MW2)</name>
    <dbReference type="NCBI Taxonomy" id="196620"/>
    <lineage>
        <taxon>Bacteria</taxon>
        <taxon>Bacillati</taxon>
        <taxon>Bacillota</taxon>
        <taxon>Bacilli</taxon>
        <taxon>Bacillales</taxon>
        <taxon>Staphylococcaceae</taxon>
        <taxon>Staphylococcus</taxon>
    </lineage>
</organism>
<proteinExistence type="evidence at protein level"/>
<accession>Q7A151</accession>
<protein>
    <recommendedName>
        <fullName>Iron-regulated surface determinant protein C</fullName>
    </recommendedName>
    <alternativeName>
        <fullName>Staphylococcal iron-regulated protein D</fullName>
    </alternativeName>
</protein>
<dbReference type="EMBL" id="BA000033">
    <property type="protein sequence ID" value="BAB94878.1"/>
    <property type="molecule type" value="Genomic_DNA"/>
</dbReference>
<dbReference type="RefSeq" id="WP_000789821.1">
    <property type="nucleotide sequence ID" value="NC_003923.1"/>
</dbReference>
<dbReference type="PDB" id="2K78">
    <property type="method" value="NMR"/>
    <property type="chains" value="A=25-150"/>
</dbReference>
<dbReference type="PDBsum" id="2K78"/>
<dbReference type="SMR" id="Q7A151"/>
<dbReference type="KEGG" id="sam:MW1013"/>
<dbReference type="HOGENOM" id="CLU_092243_1_0_9"/>
<dbReference type="EvolutionaryTrace" id="Q7A151"/>
<dbReference type="GO" id="GO:0005576">
    <property type="term" value="C:extracellular region"/>
    <property type="evidence" value="ECO:0007669"/>
    <property type="project" value="UniProtKB-KW"/>
</dbReference>
<dbReference type="GO" id="GO:0009274">
    <property type="term" value="C:peptidoglycan-based cell wall"/>
    <property type="evidence" value="ECO:0007669"/>
    <property type="project" value="InterPro"/>
</dbReference>
<dbReference type="GO" id="GO:0030492">
    <property type="term" value="F:hemoglobin binding"/>
    <property type="evidence" value="ECO:0007669"/>
    <property type="project" value="InterPro"/>
</dbReference>
<dbReference type="GO" id="GO:0046872">
    <property type="term" value="F:metal ion binding"/>
    <property type="evidence" value="ECO:0007669"/>
    <property type="project" value="UniProtKB-KW"/>
</dbReference>
<dbReference type="GO" id="GO:0015886">
    <property type="term" value="P:heme transport"/>
    <property type="evidence" value="ECO:0007669"/>
    <property type="project" value="InterPro"/>
</dbReference>
<dbReference type="CDD" id="cd06920">
    <property type="entry name" value="NEAT"/>
    <property type="match status" value="1"/>
</dbReference>
<dbReference type="Gene3D" id="2.60.40.1850">
    <property type="match status" value="1"/>
</dbReference>
<dbReference type="InterPro" id="IPR019909">
    <property type="entry name" value="Haem_uptake_protein_IsdC"/>
</dbReference>
<dbReference type="InterPro" id="IPR050436">
    <property type="entry name" value="IsdA"/>
</dbReference>
<dbReference type="InterPro" id="IPR006635">
    <property type="entry name" value="NEAT_dom"/>
</dbReference>
<dbReference type="InterPro" id="IPR037250">
    <property type="entry name" value="NEAT_dom_sf"/>
</dbReference>
<dbReference type="InterPro" id="IPR017505">
    <property type="entry name" value="Sortase_SrtB_sig_NPQTN"/>
</dbReference>
<dbReference type="NCBIfam" id="TIGR03656">
    <property type="entry name" value="IsdC"/>
    <property type="match status" value="1"/>
</dbReference>
<dbReference type="NCBIfam" id="TIGR03068">
    <property type="entry name" value="srtB_sig_NPQTN"/>
    <property type="match status" value="1"/>
</dbReference>
<dbReference type="PANTHER" id="PTHR37824">
    <property type="entry name" value="IRON-REGULATED SURFACE DETERMINANT PROTEIN C"/>
    <property type="match status" value="1"/>
</dbReference>
<dbReference type="PANTHER" id="PTHR37824:SF1">
    <property type="entry name" value="IRON-REGULATED SURFACE DETERMINANT PROTEIN C"/>
    <property type="match status" value="1"/>
</dbReference>
<dbReference type="Pfam" id="PF05031">
    <property type="entry name" value="NEAT"/>
    <property type="match status" value="1"/>
</dbReference>
<dbReference type="SMART" id="SM00725">
    <property type="entry name" value="NEAT"/>
    <property type="match status" value="1"/>
</dbReference>
<dbReference type="SUPFAM" id="SSF158911">
    <property type="entry name" value="NEAT domain-like"/>
    <property type="match status" value="1"/>
</dbReference>
<dbReference type="PROSITE" id="PS50978">
    <property type="entry name" value="NEAT"/>
    <property type="match status" value="1"/>
</dbReference>
<name>ISDC_STAAW</name>
<feature type="signal peptide" evidence="3">
    <location>
        <begin position="1"/>
        <end position="28"/>
    </location>
</feature>
<feature type="chain" id="PRO_0000019454" description="Iron-regulated surface determinant protein C">
    <location>
        <begin position="29"/>
        <end position="192"/>
    </location>
</feature>
<feature type="propeptide" id="PRO_0000019455" description="Removed by sortase B" evidence="2">
    <location>
        <begin position="193"/>
        <end position="227"/>
    </location>
</feature>
<feature type="domain" description="NEAT" evidence="4">
    <location>
        <begin position="29"/>
        <end position="150"/>
    </location>
</feature>
<feature type="region of interest" description="Disordered" evidence="5">
    <location>
        <begin position="149"/>
        <end position="191"/>
    </location>
</feature>
<feature type="short sequence motif" description="NPQTN sorting signal" evidence="2">
    <location>
        <begin position="189"/>
        <end position="193"/>
    </location>
</feature>
<feature type="compositionally biased region" description="Low complexity" evidence="5">
    <location>
        <begin position="161"/>
        <end position="175"/>
    </location>
</feature>
<feature type="binding site" evidence="2">
    <location>
        <position position="47"/>
    </location>
    <ligand>
        <name>heme</name>
        <dbReference type="ChEBI" id="CHEBI:30413"/>
    </ligand>
</feature>
<feature type="binding site" evidence="2">
    <location>
        <position position="48"/>
    </location>
    <ligand>
        <name>heme</name>
        <dbReference type="ChEBI" id="CHEBI:30413"/>
    </ligand>
</feature>
<feature type="binding site" description="axial binding residue" evidence="1">
    <location>
        <position position="132"/>
    </location>
    <ligand>
        <name>heme</name>
        <dbReference type="ChEBI" id="CHEBI:30413"/>
    </ligand>
    <ligandPart>
        <name>Fe</name>
        <dbReference type="ChEBI" id="CHEBI:18248"/>
    </ligandPart>
</feature>
<feature type="binding site" evidence="2">
    <location>
        <position position="136"/>
    </location>
    <ligand>
        <name>heme</name>
        <dbReference type="ChEBI" id="CHEBI:30413"/>
    </ligand>
</feature>
<feature type="modified residue" description="Pentaglycyl murein peptidoglycan amidated threonine" evidence="2">
    <location>
        <position position="192"/>
    </location>
</feature>
<feature type="strand" evidence="9">
    <location>
        <begin position="30"/>
        <end position="40"/>
    </location>
</feature>
<feature type="strand" evidence="9">
    <location>
        <begin position="43"/>
        <end position="45"/>
    </location>
</feature>
<feature type="helix" evidence="9">
    <location>
        <begin position="49"/>
        <end position="51"/>
    </location>
</feature>
<feature type="strand" evidence="9">
    <location>
        <begin position="55"/>
        <end position="61"/>
    </location>
</feature>
<feature type="strand" evidence="9">
    <location>
        <begin position="66"/>
        <end position="73"/>
    </location>
</feature>
<feature type="turn" evidence="9">
    <location>
        <begin position="75"/>
        <end position="77"/>
    </location>
</feature>
<feature type="strand" evidence="9">
    <location>
        <begin position="78"/>
        <end position="83"/>
    </location>
</feature>
<feature type="strand" evidence="9">
    <location>
        <begin position="89"/>
        <end position="91"/>
    </location>
</feature>
<feature type="turn" evidence="9">
    <location>
        <begin position="95"/>
        <end position="98"/>
    </location>
</feature>
<feature type="strand" evidence="9">
    <location>
        <begin position="99"/>
        <end position="105"/>
    </location>
</feature>
<feature type="strand" evidence="9">
    <location>
        <begin position="107"/>
        <end position="111"/>
    </location>
</feature>
<feature type="strand" evidence="9">
    <location>
        <begin position="113"/>
        <end position="124"/>
    </location>
</feature>
<feature type="strand" evidence="9">
    <location>
        <begin position="129"/>
        <end position="144"/>
    </location>
</feature>